<keyword id="KW-0687">Ribonucleoprotein</keyword>
<keyword id="KW-0689">Ribosomal protein</keyword>
<keyword id="KW-0694">RNA-binding</keyword>
<keyword id="KW-0699">rRNA-binding</keyword>
<comment type="function">
    <text evidence="1">One of the primary rRNA binding proteins, this protein initially binds near the 5'-end of the 23S rRNA. It is important during the early stages of 50S assembly. It makes multiple contacts with different domains of the 23S rRNA in the assembled 50S subunit and ribosome.</text>
</comment>
<comment type="function">
    <text evidence="1">Forms part of the polypeptide exit tunnel.</text>
</comment>
<comment type="subunit">
    <text evidence="1">Part of the 50S ribosomal subunit.</text>
</comment>
<comment type="similarity">
    <text evidence="1">Belongs to the universal ribosomal protein uL4 family.</text>
</comment>
<gene>
    <name evidence="1" type="primary">rplD</name>
    <name type="ordered locus">DvMF_0080</name>
</gene>
<accession>B8DN97</accession>
<feature type="chain" id="PRO_1000142116" description="Large ribosomal subunit protein uL4">
    <location>
        <begin position="1"/>
        <end position="206"/>
    </location>
</feature>
<feature type="region of interest" description="Disordered" evidence="2">
    <location>
        <begin position="55"/>
        <end position="80"/>
    </location>
</feature>
<sequence>MAVVKVYDQNKKEAGELTLAPEVFEVEVKPEILNLVVRAHRAGLRSGTHATKTRAFVSGGGAKPWRQKGTGRARSGSNRSPIWRGGAVIFGPQPREYGFKVNKKVRQLALKMALSSRLAGENLMVVKGIELPEIKTKLFAKVAGALGLEKALVITAEADTTLALSARNIPGITLITADQLSVYEILKHPKLVMFEGAVESVQARLK</sequence>
<dbReference type="EMBL" id="CP001197">
    <property type="protein sequence ID" value="ACL07041.1"/>
    <property type="molecule type" value="Genomic_DNA"/>
</dbReference>
<dbReference type="SMR" id="B8DN97"/>
<dbReference type="STRING" id="883.DvMF_0080"/>
<dbReference type="KEGG" id="dvm:DvMF_0080"/>
<dbReference type="eggNOG" id="COG0088">
    <property type="taxonomic scope" value="Bacteria"/>
</dbReference>
<dbReference type="HOGENOM" id="CLU_041575_5_2_7"/>
<dbReference type="OrthoDB" id="9803201at2"/>
<dbReference type="GO" id="GO:1990904">
    <property type="term" value="C:ribonucleoprotein complex"/>
    <property type="evidence" value="ECO:0007669"/>
    <property type="project" value="UniProtKB-KW"/>
</dbReference>
<dbReference type="GO" id="GO:0005840">
    <property type="term" value="C:ribosome"/>
    <property type="evidence" value="ECO:0007669"/>
    <property type="project" value="UniProtKB-KW"/>
</dbReference>
<dbReference type="GO" id="GO:0019843">
    <property type="term" value="F:rRNA binding"/>
    <property type="evidence" value="ECO:0007669"/>
    <property type="project" value="UniProtKB-UniRule"/>
</dbReference>
<dbReference type="GO" id="GO:0003735">
    <property type="term" value="F:structural constituent of ribosome"/>
    <property type="evidence" value="ECO:0007669"/>
    <property type="project" value="InterPro"/>
</dbReference>
<dbReference type="GO" id="GO:0006412">
    <property type="term" value="P:translation"/>
    <property type="evidence" value="ECO:0007669"/>
    <property type="project" value="UniProtKB-UniRule"/>
</dbReference>
<dbReference type="Gene3D" id="3.40.1370.10">
    <property type="match status" value="1"/>
</dbReference>
<dbReference type="HAMAP" id="MF_01328_B">
    <property type="entry name" value="Ribosomal_uL4_B"/>
    <property type="match status" value="1"/>
</dbReference>
<dbReference type="InterPro" id="IPR002136">
    <property type="entry name" value="Ribosomal_uL4"/>
</dbReference>
<dbReference type="InterPro" id="IPR013005">
    <property type="entry name" value="Ribosomal_uL4-like"/>
</dbReference>
<dbReference type="InterPro" id="IPR023574">
    <property type="entry name" value="Ribosomal_uL4_dom_sf"/>
</dbReference>
<dbReference type="NCBIfam" id="TIGR03953">
    <property type="entry name" value="rplD_bact"/>
    <property type="match status" value="1"/>
</dbReference>
<dbReference type="PANTHER" id="PTHR10746">
    <property type="entry name" value="50S RIBOSOMAL PROTEIN L4"/>
    <property type="match status" value="1"/>
</dbReference>
<dbReference type="PANTHER" id="PTHR10746:SF6">
    <property type="entry name" value="LARGE RIBOSOMAL SUBUNIT PROTEIN UL4M"/>
    <property type="match status" value="1"/>
</dbReference>
<dbReference type="Pfam" id="PF00573">
    <property type="entry name" value="Ribosomal_L4"/>
    <property type="match status" value="1"/>
</dbReference>
<dbReference type="SUPFAM" id="SSF52166">
    <property type="entry name" value="Ribosomal protein L4"/>
    <property type="match status" value="1"/>
</dbReference>
<protein>
    <recommendedName>
        <fullName evidence="1">Large ribosomal subunit protein uL4</fullName>
    </recommendedName>
    <alternativeName>
        <fullName evidence="3">50S ribosomal protein L4</fullName>
    </alternativeName>
</protein>
<organism>
    <name type="scientific">Nitratidesulfovibrio vulgaris (strain DSM 19637 / Miyazaki F)</name>
    <name type="common">Desulfovibrio vulgaris</name>
    <dbReference type="NCBI Taxonomy" id="883"/>
    <lineage>
        <taxon>Bacteria</taxon>
        <taxon>Pseudomonadati</taxon>
        <taxon>Thermodesulfobacteriota</taxon>
        <taxon>Desulfovibrionia</taxon>
        <taxon>Desulfovibrionales</taxon>
        <taxon>Desulfovibrionaceae</taxon>
        <taxon>Nitratidesulfovibrio</taxon>
    </lineage>
</organism>
<reference key="1">
    <citation type="submission" date="2008-10" db="EMBL/GenBank/DDBJ databases">
        <title>Complete sequence of Desulfovibrio vulgaris str. 'Miyazaki F'.</title>
        <authorList>
            <person name="Lucas S."/>
            <person name="Copeland A."/>
            <person name="Lapidus A."/>
            <person name="Glavina del Rio T."/>
            <person name="Dalin E."/>
            <person name="Tice H."/>
            <person name="Bruce D."/>
            <person name="Goodwin L."/>
            <person name="Pitluck S."/>
            <person name="Sims D."/>
            <person name="Brettin T."/>
            <person name="Detter J.C."/>
            <person name="Han C."/>
            <person name="Larimer F."/>
            <person name="Land M."/>
            <person name="Hauser L."/>
            <person name="Kyrpides N."/>
            <person name="Mikhailova N."/>
            <person name="Hazen T.C."/>
            <person name="Richardson P."/>
        </authorList>
    </citation>
    <scope>NUCLEOTIDE SEQUENCE [LARGE SCALE GENOMIC DNA]</scope>
    <source>
        <strain>DSM 19637 / Miyazaki F</strain>
    </source>
</reference>
<proteinExistence type="inferred from homology"/>
<name>RL4_NITV9</name>
<evidence type="ECO:0000255" key="1">
    <source>
        <dbReference type="HAMAP-Rule" id="MF_01328"/>
    </source>
</evidence>
<evidence type="ECO:0000256" key="2">
    <source>
        <dbReference type="SAM" id="MobiDB-lite"/>
    </source>
</evidence>
<evidence type="ECO:0000305" key="3"/>